<organism>
    <name type="scientific">Rickettsia typhi (strain ATCC VR-144 / Wilmington)</name>
    <dbReference type="NCBI Taxonomy" id="257363"/>
    <lineage>
        <taxon>Bacteria</taxon>
        <taxon>Pseudomonadati</taxon>
        <taxon>Pseudomonadota</taxon>
        <taxon>Alphaproteobacteria</taxon>
        <taxon>Rickettsiales</taxon>
        <taxon>Rickettsiaceae</taxon>
        <taxon>Rickettsieae</taxon>
        <taxon>Rickettsia</taxon>
        <taxon>typhus group</taxon>
    </lineage>
</organism>
<gene>
    <name evidence="1" type="primary">kdsA</name>
    <name type="ordered locus">RT0070</name>
</gene>
<dbReference type="EC" id="2.5.1.55" evidence="1"/>
<dbReference type="EMBL" id="AE017197">
    <property type="protein sequence ID" value="AAU03556.1"/>
    <property type="molecule type" value="Genomic_DNA"/>
</dbReference>
<dbReference type="RefSeq" id="WP_011190543.1">
    <property type="nucleotide sequence ID" value="NC_006142.1"/>
</dbReference>
<dbReference type="SMR" id="Q68XT6"/>
<dbReference type="KEGG" id="rty:RT0070"/>
<dbReference type="eggNOG" id="COG2877">
    <property type="taxonomic scope" value="Bacteria"/>
</dbReference>
<dbReference type="HOGENOM" id="CLU_036666_0_0_5"/>
<dbReference type="OrthoDB" id="9776934at2"/>
<dbReference type="UniPathway" id="UPA00030"/>
<dbReference type="UniPathway" id="UPA00357">
    <property type="reaction ID" value="UER00474"/>
</dbReference>
<dbReference type="Proteomes" id="UP000000604">
    <property type="component" value="Chromosome"/>
</dbReference>
<dbReference type="GO" id="GO:0005737">
    <property type="term" value="C:cytoplasm"/>
    <property type="evidence" value="ECO:0007669"/>
    <property type="project" value="UniProtKB-SubCell"/>
</dbReference>
<dbReference type="GO" id="GO:0008676">
    <property type="term" value="F:3-deoxy-8-phosphooctulonate synthase activity"/>
    <property type="evidence" value="ECO:0007669"/>
    <property type="project" value="UniProtKB-UniRule"/>
</dbReference>
<dbReference type="GO" id="GO:0019294">
    <property type="term" value="P:keto-3-deoxy-D-manno-octulosonic acid biosynthetic process"/>
    <property type="evidence" value="ECO:0007669"/>
    <property type="project" value="UniProtKB-UniRule"/>
</dbReference>
<dbReference type="Gene3D" id="3.20.20.70">
    <property type="entry name" value="Aldolase class I"/>
    <property type="match status" value="1"/>
</dbReference>
<dbReference type="HAMAP" id="MF_00056">
    <property type="entry name" value="KDO8P_synth"/>
    <property type="match status" value="1"/>
</dbReference>
<dbReference type="InterPro" id="IPR013785">
    <property type="entry name" value="Aldolase_TIM"/>
</dbReference>
<dbReference type="InterPro" id="IPR006218">
    <property type="entry name" value="DAHP1/KDSA"/>
</dbReference>
<dbReference type="InterPro" id="IPR006269">
    <property type="entry name" value="KDO8P_synthase"/>
</dbReference>
<dbReference type="NCBIfam" id="TIGR01362">
    <property type="entry name" value="KDO8P_synth"/>
    <property type="match status" value="1"/>
</dbReference>
<dbReference type="NCBIfam" id="NF003543">
    <property type="entry name" value="PRK05198.1"/>
    <property type="match status" value="1"/>
</dbReference>
<dbReference type="PANTHER" id="PTHR21057">
    <property type="entry name" value="PHOSPHO-2-DEHYDRO-3-DEOXYHEPTONATE ALDOLASE"/>
    <property type="match status" value="1"/>
</dbReference>
<dbReference type="Pfam" id="PF00793">
    <property type="entry name" value="DAHP_synth_1"/>
    <property type="match status" value="1"/>
</dbReference>
<dbReference type="SUPFAM" id="SSF51569">
    <property type="entry name" value="Aldolase"/>
    <property type="match status" value="1"/>
</dbReference>
<keyword id="KW-0963">Cytoplasm</keyword>
<keyword id="KW-0448">Lipopolysaccharide biosynthesis</keyword>
<keyword id="KW-0808">Transferase</keyword>
<proteinExistence type="inferred from homology"/>
<protein>
    <recommendedName>
        <fullName evidence="1">2-dehydro-3-deoxyphosphooctonate aldolase</fullName>
        <ecNumber evidence="1">2.5.1.55</ecNumber>
    </recommendedName>
    <alternativeName>
        <fullName evidence="1">3-deoxy-D-manno-octulosonic acid 8-phosphate synthase</fullName>
    </alternativeName>
    <alternativeName>
        <fullName evidence="1">KDO-8-phosphate synthase</fullName>
        <shortName evidence="1">KDO 8-P synthase</shortName>
        <shortName evidence="1">KDOPS</shortName>
    </alternativeName>
    <alternativeName>
        <fullName evidence="1">Phospho-2-dehydro-3-deoxyoctonate aldolase</fullName>
    </alternativeName>
</protein>
<sequence>MKKVVKLNNIKIGNDLQFVLIAGPCQIEDEDHALFMAEKLIQLTSKLSIPFIYKSSFDKANRTSINGIRGLGIEKGLEILSKVKSEFNCPIITDVHSESQCTDTAKVVDILQIPAFLCRQTDLLKAAAKTGKIVKVKKGQFLAPWDMKNVQTKLEAFGAKDILFTERGSCFGYNNLISDMRSLAIMSELNVPVVFDATHSVQQPGGRGGSSGGERKYVELLAKAAISVGIAGIYMEVHQDPDNAPSDGPCMIKLDHLESILIKLKKYDKITKEE</sequence>
<reference key="1">
    <citation type="journal article" date="2004" name="J. Bacteriol.">
        <title>Complete genome sequence of Rickettsia typhi and comparison with sequences of other Rickettsiae.</title>
        <authorList>
            <person name="McLeod M.P."/>
            <person name="Qin X."/>
            <person name="Karpathy S.E."/>
            <person name="Gioia J."/>
            <person name="Highlander S.K."/>
            <person name="Fox G.E."/>
            <person name="McNeill T.Z."/>
            <person name="Jiang H."/>
            <person name="Muzny D."/>
            <person name="Jacob L.S."/>
            <person name="Hawes A.C."/>
            <person name="Sodergren E."/>
            <person name="Gill R."/>
            <person name="Hume J."/>
            <person name="Morgan M."/>
            <person name="Fan G."/>
            <person name="Amin A.G."/>
            <person name="Gibbs R.A."/>
            <person name="Hong C."/>
            <person name="Yu X.-J."/>
            <person name="Walker D.H."/>
            <person name="Weinstock G.M."/>
        </authorList>
    </citation>
    <scope>NUCLEOTIDE SEQUENCE [LARGE SCALE GENOMIC DNA]</scope>
    <source>
        <strain>ATCC VR-144 / Wilmington</strain>
    </source>
</reference>
<comment type="catalytic activity">
    <reaction evidence="1">
        <text>D-arabinose 5-phosphate + phosphoenolpyruvate + H2O = 3-deoxy-alpha-D-manno-2-octulosonate-8-phosphate + phosphate</text>
        <dbReference type="Rhea" id="RHEA:14053"/>
        <dbReference type="ChEBI" id="CHEBI:15377"/>
        <dbReference type="ChEBI" id="CHEBI:43474"/>
        <dbReference type="ChEBI" id="CHEBI:57693"/>
        <dbReference type="ChEBI" id="CHEBI:58702"/>
        <dbReference type="ChEBI" id="CHEBI:85985"/>
        <dbReference type="EC" id="2.5.1.55"/>
    </reaction>
</comment>
<comment type="pathway">
    <text evidence="1">Carbohydrate biosynthesis; 3-deoxy-D-manno-octulosonate biosynthesis; 3-deoxy-D-manno-octulosonate from D-ribulose 5-phosphate: step 2/3.</text>
</comment>
<comment type="pathway">
    <text evidence="1">Bacterial outer membrane biogenesis; lipopolysaccharide biosynthesis.</text>
</comment>
<comment type="subcellular location">
    <subcellularLocation>
        <location evidence="1">Cytoplasm</location>
    </subcellularLocation>
</comment>
<comment type="similarity">
    <text evidence="1">Belongs to the KdsA family.</text>
</comment>
<feature type="chain" id="PRO_0000187161" description="2-dehydro-3-deoxyphosphooctonate aldolase">
    <location>
        <begin position="1"/>
        <end position="274"/>
    </location>
</feature>
<name>KDSA_RICTY</name>
<accession>Q68XT6</accession>
<evidence type="ECO:0000255" key="1">
    <source>
        <dbReference type="HAMAP-Rule" id="MF_00056"/>
    </source>
</evidence>